<sequence>MGNVIRVQHLNYTYPEAKQQALTDVSFDVAKGEWLAIIGHNGSGKSTLAKNLNGLLAPESGTVQVAGMTLSEETVWDIRAKVGIVFQNPDNQFVGATVADDVAFGLENRGVPRPEMIKRVDEALDRVGMTAFADREPARLSGGQKQRVAIAGIVAQRPEIIILDESTSMLDPAGRQEVLGVIRELKDELGLTVLSITHDIDEAAEAHRIILLNDGKINEIGTPSEIFSHGMELLRLGLDVPYSEKLKDALAQRGIAMPKDYMDNERLVDYLWTLHSTM</sequence>
<name>ECFA1_LACP3</name>
<keyword id="KW-0067">ATP-binding</keyword>
<keyword id="KW-1003">Cell membrane</keyword>
<keyword id="KW-0472">Membrane</keyword>
<keyword id="KW-0547">Nucleotide-binding</keyword>
<keyword id="KW-1185">Reference proteome</keyword>
<keyword id="KW-1278">Translocase</keyword>
<keyword id="KW-0813">Transport</keyword>
<dbReference type="EC" id="7.-.-.-" evidence="2"/>
<dbReference type="EMBL" id="CP000423">
    <property type="protein sequence ID" value="ABJ71210.1"/>
    <property type="molecule type" value="Genomic_DNA"/>
</dbReference>
<dbReference type="RefSeq" id="WP_003580999.1">
    <property type="nucleotide sequence ID" value="NC_008526.1"/>
</dbReference>
<dbReference type="RefSeq" id="YP_807652.1">
    <property type="nucleotide sequence ID" value="NC_008526.1"/>
</dbReference>
<dbReference type="SMR" id="Q035B2"/>
<dbReference type="STRING" id="321967.LSEI_2474"/>
<dbReference type="PaxDb" id="321967-LSEI_2474"/>
<dbReference type="KEGG" id="lca:LSEI_2474"/>
<dbReference type="PATRIC" id="fig|321967.11.peg.2428"/>
<dbReference type="HOGENOM" id="CLU_000604_1_22_9"/>
<dbReference type="Proteomes" id="UP000001651">
    <property type="component" value="Chromosome"/>
</dbReference>
<dbReference type="GO" id="GO:0043190">
    <property type="term" value="C:ATP-binding cassette (ABC) transporter complex"/>
    <property type="evidence" value="ECO:0007669"/>
    <property type="project" value="TreeGrafter"/>
</dbReference>
<dbReference type="GO" id="GO:0005524">
    <property type="term" value="F:ATP binding"/>
    <property type="evidence" value="ECO:0007669"/>
    <property type="project" value="UniProtKB-KW"/>
</dbReference>
<dbReference type="GO" id="GO:0016887">
    <property type="term" value="F:ATP hydrolysis activity"/>
    <property type="evidence" value="ECO:0007669"/>
    <property type="project" value="InterPro"/>
</dbReference>
<dbReference type="GO" id="GO:0042626">
    <property type="term" value="F:ATPase-coupled transmembrane transporter activity"/>
    <property type="evidence" value="ECO:0007669"/>
    <property type="project" value="TreeGrafter"/>
</dbReference>
<dbReference type="CDD" id="cd03225">
    <property type="entry name" value="ABC_cobalt_CbiO_domain1"/>
    <property type="match status" value="1"/>
</dbReference>
<dbReference type="FunFam" id="3.40.50.300:FF:000224">
    <property type="entry name" value="Energy-coupling factor transporter ATP-binding protein EcfA"/>
    <property type="match status" value="1"/>
</dbReference>
<dbReference type="Gene3D" id="3.40.50.300">
    <property type="entry name" value="P-loop containing nucleotide triphosphate hydrolases"/>
    <property type="match status" value="1"/>
</dbReference>
<dbReference type="InterPro" id="IPR003593">
    <property type="entry name" value="AAA+_ATPase"/>
</dbReference>
<dbReference type="InterPro" id="IPR003439">
    <property type="entry name" value="ABC_transporter-like_ATP-bd"/>
</dbReference>
<dbReference type="InterPro" id="IPR017871">
    <property type="entry name" value="ABC_transporter-like_CS"/>
</dbReference>
<dbReference type="InterPro" id="IPR015856">
    <property type="entry name" value="ABC_transpr_CbiO/EcfA_su"/>
</dbReference>
<dbReference type="InterPro" id="IPR050095">
    <property type="entry name" value="ECF_ABC_transporter_ATP-bd"/>
</dbReference>
<dbReference type="InterPro" id="IPR030947">
    <property type="entry name" value="EcfA_1"/>
</dbReference>
<dbReference type="InterPro" id="IPR027417">
    <property type="entry name" value="P-loop_NTPase"/>
</dbReference>
<dbReference type="NCBIfam" id="TIGR04520">
    <property type="entry name" value="ECF_ATPase_1"/>
    <property type="match status" value="1"/>
</dbReference>
<dbReference type="NCBIfam" id="NF010156">
    <property type="entry name" value="PRK13635.1"/>
    <property type="match status" value="1"/>
</dbReference>
<dbReference type="NCBIfam" id="NF010167">
    <property type="entry name" value="PRK13648.1"/>
    <property type="match status" value="1"/>
</dbReference>
<dbReference type="PANTHER" id="PTHR43553:SF24">
    <property type="entry name" value="ENERGY-COUPLING FACTOR TRANSPORTER ATP-BINDING PROTEIN ECFA1"/>
    <property type="match status" value="1"/>
</dbReference>
<dbReference type="PANTHER" id="PTHR43553">
    <property type="entry name" value="HEAVY METAL TRANSPORTER"/>
    <property type="match status" value="1"/>
</dbReference>
<dbReference type="Pfam" id="PF00005">
    <property type="entry name" value="ABC_tran"/>
    <property type="match status" value="1"/>
</dbReference>
<dbReference type="SMART" id="SM00382">
    <property type="entry name" value="AAA"/>
    <property type="match status" value="1"/>
</dbReference>
<dbReference type="SUPFAM" id="SSF52540">
    <property type="entry name" value="P-loop containing nucleoside triphosphate hydrolases"/>
    <property type="match status" value="1"/>
</dbReference>
<dbReference type="PROSITE" id="PS00211">
    <property type="entry name" value="ABC_TRANSPORTER_1"/>
    <property type="match status" value="1"/>
</dbReference>
<dbReference type="PROSITE" id="PS50893">
    <property type="entry name" value="ABC_TRANSPORTER_2"/>
    <property type="match status" value="1"/>
</dbReference>
<dbReference type="PROSITE" id="PS51246">
    <property type="entry name" value="CBIO"/>
    <property type="match status" value="1"/>
</dbReference>
<comment type="function">
    <text evidence="2 3">ATP-binding (A) component of a common energy-coupling factor (ECF) ABC-transporter complex. Unlike classic ABC transporters this ECF transporter provides the energy necessary to transport a number of different substrates including 5-formyltetrahydrofolate and thiamine. Expression of the complex plus FolT or ThiT in Lactococcus lactis subsp. cremoris (strain NZ9000) allows 5-formyltetrahydrofolate or thiamine uptake respectively; 5-formyltetrahydrofolate or thiamine are not taken up in the absence of FolT/ThiT or the EcfA1A2T complex. Deenergized L.lactis subsp. cremoris (treated with 2-deoxyglucose) does not take up substrate.</text>
</comment>
<comment type="subunit">
    <text evidence="3">Forms a stable energy-coupling factor (ECF) transporter complex probably composed of 2 membrane-embedded substrate-binding proteins (S component), 2 ATP-binding proteins (A component) and 2 transmembrane proteins (T component). This complex interacts with a number of substrate-specific components, including FolT and ThiT for 5-formyltetrahydrofolate and thiamine respectively.</text>
</comment>
<comment type="subcellular location">
    <subcellularLocation>
        <location evidence="2">Cell membrane</location>
        <topology evidence="2">Peripheral membrane protein</topology>
    </subcellularLocation>
</comment>
<comment type="similarity">
    <text evidence="2">Belongs to the ABC transporter superfamily. Energy-coupling factor EcfA family.</text>
</comment>
<protein>
    <recommendedName>
        <fullName evidence="2">Energy-coupling factor transporter ATP-binding protein EcfA1</fullName>
        <shortName evidence="2">ECF transporter A component EcfA</shortName>
        <ecNumber evidence="2">7.-.-.-</ecNumber>
    </recommendedName>
</protein>
<proteinExistence type="evidence at protein level"/>
<accession>Q035B2</accession>
<gene>
    <name evidence="2" type="primary">ecfA1</name>
    <name type="synonym">cbiO2</name>
    <name type="synonym">ecfA</name>
    <name type="ordered locus">LSEI_2474</name>
</gene>
<evidence type="ECO:0000255" key="1"/>
<evidence type="ECO:0000255" key="2">
    <source>
        <dbReference type="HAMAP-Rule" id="MF_01710"/>
    </source>
</evidence>
<evidence type="ECO:0000269" key="3">
    <source>
    </source>
</evidence>
<feature type="chain" id="PRO_0000287946" description="Energy-coupling factor transporter ATP-binding protein EcfA1">
    <location>
        <begin position="1"/>
        <end position="278"/>
    </location>
</feature>
<feature type="domain" description="ABC transporter" evidence="2">
    <location>
        <begin position="5"/>
        <end position="239"/>
    </location>
</feature>
<feature type="active site" description="Proton acceptor" evidence="1">
    <location>
        <position position="165"/>
    </location>
</feature>
<feature type="binding site" evidence="2">
    <location>
        <begin position="39"/>
        <end position="46"/>
    </location>
    <ligand>
        <name>ATP</name>
        <dbReference type="ChEBI" id="CHEBI:30616"/>
    </ligand>
</feature>
<reference key="1">
    <citation type="journal article" date="2006" name="Proc. Natl. Acad. Sci. U.S.A.">
        <title>Comparative genomics of the lactic acid bacteria.</title>
        <authorList>
            <person name="Makarova K.S."/>
            <person name="Slesarev A."/>
            <person name="Wolf Y.I."/>
            <person name="Sorokin A."/>
            <person name="Mirkin B."/>
            <person name="Koonin E.V."/>
            <person name="Pavlov A."/>
            <person name="Pavlova N."/>
            <person name="Karamychev V."/>
            <person name="Polouchine N."/>
            <person name="Shakhova V."/>
            <person name="Grigoriev I."/>
            <person name="Lou Y."/>
            <person name="Rohksar D."/>
            <person name="Lucas S."/>
            <person name="Huang K."/>
            <person name="Goodstein D.M."/>
            <person name="Hawkins T."/>
            <person name="Plengvidhya V."/>
            <person name="Welker D."/>
            <person name="Hughes J."/>
            <person name="Goh Y."/>
            <person name="Benson A."/>
            <person name="Baldwin K."/>
            <person name="Lee J.-H."/>
            <person name="Diaz-Muniz I."/>
            <person name="Dosti B."/>
            <person name="Smeianov V."/>
            <person name="Wechter W."/>
            <person name="Barabote R."/>
            <person name="Lorca G."/>
            <person name="Altermann E."/>
            <person name="Barrangou R."/>
            <person name="Ganesan B."/>
            <person name="Xie Y."/>
            <person name="Rawsthorne H."/>
            <person name="Tamir D."/>
            <person name="Parker C."/>
            <person name="Breidt F."/>
            <person name="Broadbent J.R."/>
            <person name="Hutkins R."/>
            <person name="O'Sullivan D."/>
            <person name="Steele J."/>
            <person name="Unlu G."/>
            <person name="Saier M.H. Jr."/>
            <person name="Klaenhammer T."/>
            <person name="Richardson P."/>
            <person name="Kozyavkin S."/>
            <person name="Weimer B.C."/>
            <person name="Mills D.A."/>
        </authorList>
    </citation>
    <scope>NUCLEOTIDE SEQUENCE [LARGE SCALE GENOMIC DNA]</scope>
    <source>
        <strain>ATCC 334 / BCRC 17002 / CCUG 31169 / CIP 107868 / KCTC 3260 / NRRL B-441</strain>
    </source>
</reference>
<reference key="2">
    <citation type="journal article" date="2009" name="J. Bacteriol.">
        <title>A novel class of modular transporters for vitamins in prokaryotes.</title>
        <authorList>
            <person name="Rodionov D.A."/>
            <person name="Hebbeln P."/>
            <person name="Eudes A."/>
            <person name="ter Beek J."/>
            <person name="Rodionova I.A."/>
            <person name="Erkens G.B."/>
            <person name="Slotboom D.J."/>
            <person name="Gelfand M.S."/>
            <person name="Osterman A.L."/>
            <person name="Hanson A.D."/>
            <person name="Eitinger T."/>
        </authorList>
    </citation>
    <scope>FUNCTION AS A TRANSPORT COMPONENT</scope>
    <scope>SUBUNIT</scope>
    <scope>SUBSTRATES</scope>
    <scope>EXPRESSION IN L.LACTIS</scope>
    <source>
        <strain>ATCC 334 / BCRC 17002 / CCUG 31169 / CIP 107868 / KCTC 3260 / NRRL B-441</strain>
    </source>
</reference>
<organism>
    <name type="scientific">Lacticaseibacillus paracasei (strain ATCC 334 / BCRC 17002 / CCUG 31169 / CIP 107868 / KCTC 3260 / NRRL B-441)</name>
    <name type="common">Lactobacillus paracasei</name>
    <dbReference type="NCBI Taxonomy" id="321967"/>
    <lineage>
        <taxon>Bacteria</taxon>
        <taxon>Bacillati</taxon>
        <taxon>Bacillota</taxon>
        <taxon>Bacilli</taxon>
        <taxon>Lactobacillales</taxon>
        <taxon>Lactobacillaceae</taxon>
        <taxon>Lacticaseibacillus</taxon>
    </lineage>
</organism>